<proteinExistence type="evidence at protein level"/>
<reference key="1">
    <citation type="journal article" date="1999" name="Cell">
        <title>A striking organization of a large family of human neural cadherin-like cell adhesion genes.</title>
        <authorList>
            <person name="Wu Q."/>
            <person name="Maniatis T."/>
        </authorList>
    </citation>
    <scope>NUCLEOTIDE SEQUENCE [MRNA] (ISOFORMS LONG AND SHORT)</scope>
    <source>
        <tissue>Brain</tissue>
    </source>
</reference>
<reference key="2">
    <citation type="submission" date="2005-09" db="EMBL/GenBank/DDBJ databases">
        <authorList>
            <person name="Mural R.J."/>
            <person name="Istrail S."/>
            <person name="Sutton G.G."/>
            <person name="Florea L."/>
            <person name="Halpern A.L."/>
            <person name="Mobarry C.M."/>
            <person name="Lippert R."/>
            <person name="Walenz B."/>
            <person name="Shatkay H."/>
            <person name="Dew I."/>
            <person name="Miller J.R."/>
            <person name="Flanigan M.J."/>
            <person name="Edwards N.J."/>
            <person name="Bolanos R."/>
            <person name="Fasulo D."/>
            <person name="Halldorsson B.V."/>
            <person name="Hannenhalli S."/>
            <person name="Turner R."/>
            <person name="Yooseph S."/>
            <person name="Lu F."/>
            <person name="Nusskern D.R."/>
            <person name="Shue B.C."/>
            <person name="Zheng X.H."/>
            <person name="Zhong F."/>
            <person name="Delcher A.L."/>
            <person name="Huson D.H."/>
            <person name="Kravitz S.A."/>
            <person name="Mouchard L."/>
            <person name="Reinert K."/>
            <person name="Remington K.A."/>
            <person name="Clark A.G."/>
            <person name="Waterman M.S."/>
            <person name="Eichler E.E."/>
            <person name="Adams M.D."/>
            <person name="Hunkapiller M.W."/>
            <person name="Myers E.W."/>
            <person name="Venter J.C."/>
        </authorList>
    </citation>
    <scope>NUCLEOTIDE SEQUENCE [LARGE SCALE GENOMIC DNA]</scope>
</reference>
<reference key="3">
    <citation type="journal article" date="2004" name="Genome Res.">
        <title>The status, quality, and expansion of the NIH full-length cDNA project: the Mammalian Gene Collection (MGC).</title>
        <authorList>
            <consortium name="The MGC Project Team"/>
        </authorList>
    </citation>
    <scope>NUCLEOTIDE SEQUENCE [LARGE SCALE MRNA] (ISOFORM SHORT)</scope>
    <source>
        <tissue>Cerebellum</tissue>
    </source>
</reference>
<accession>Q9Y5I4</accession>
<accession>Q2M3V1</accession>
<accession>Q9Y5F4</accession>
<sequence length="1007" mass="109450">MEQAGTRPAATEHPRLRRPMPWLLLLPLLLLLLLLLPGPAASQLRYSVPEEQAPGALVGNVARALGLELRRLGPGCLRINHLGAPSPRYLELDLTSGALFVNERIDREALCEQRPRCLLSLEVLAHNPVAVSAVEVEILDINDNSPRFPRPNYQLQVSESVAPGARFHIESAQDPDVGANSVQTYELSPSEHFELDLKPLQENSKVLELVLRKGLDREQAALHHLVLTAVDGGIPARSGTAQISVRVLDTNDNSPAFDQSTYRVQLREDSPPGTLVVKLNASDPDEGSNGELRYSLSSYTSDRERQLFSIDASTGEVRVIGGLDYEEASSYQIYVQATDRGPVPMAGHCKVLVDIVDVNDNAPEVVLTDLYSPVPENATPNTIVAVLSVNDQDSGPNRKVSLGLEATLPFRLNGFGNSYTLVVSGPLDRERVAVYNITVTATDGGIPQLTSLRTLKVEISDINDNPPSFLEDSYSIYIQENNLPGVLLCTVQATDPDEKENAEVTYSLLEREIQGLPVTSYVSINSASGSLYAVNSFDYEKFREFFVTVEAQDKGSPPLSSTVTANVYVVDMNDHAPHILYPTSTNSSAAFEMVPRTAPAGYLVTKVIAMDSDSGQNAWLFYHLAQTSDLDLFKVELHTGEIRTTRKMGDESGSTFNLTVVVRDNGEPSLSASVAITVAVVDRVSKILPDTQRHVKSPRTYSEITLYLIIALSTVSFIFLLTIIILSIIKCYRYTAYGTACCGGFCGVRERSPAELYKQANNNIDARIPHGLKVQPHFIEVRGNGSLTKTYCYKACLTAGSGSDTFMFYNTGAQTGPGPSGAQAAVTDSRNLTGQSGQNAGNLIILKNEAVSQNEPRQPNPDWRYSASLRAGMHSSVHLEEAGILRAGPGGPDQQWPTVSSATPEPEAGEVSPPVGAGVNSNSWTFKYGPGNPKQSGPGELPDKFIIPGSPAIISIRQEPTNSQIDKSDFITFGKKEETKKKKKKKKGNKTQEKKEKGNSTTDNSDQ</sequence>
<gene>
    <name type="primary">PCDHAC2</name>
</gene>
<organism>
    <name type="scientific">Homo sapiens</name>
    <name type="common">Human</name>
    <dbReference type="NCBI Taxonomy" id="9606"/>
    <lineage>
        <taxon>Eukaryota</taxon>
        <taxon>Metazoa</taxon>
        <taxon>Chordata</taxon>
        <taxon>Craniata</taxon>
        <taxon>Vertebrata</taxon>
        <taxon>Euteleostomi</taxon>
        <taxon>Mammalia</taxon>
        <taxon>Eutheria</taxon>
        <taxon>Euarchontoglires</taxon>
        <taxon>Primates</taxon>
        <taxon>Haplorrhini</taxon>
        <taxon>Catarrhini</taxon>
        <taxon>Hominidae</taxon>
        <taxon>Homo</taxon>
    </lineage>
</organism>
<keyword id="KW-0025">Alternative splicing</keyword>
<keyword id="KW-0106">Calcium</keyword>
<keyword id="KW-0130">Cell adhesion</keyword>
<keyword id="KW-1003">Cell membrane</keyword>
<keyword id="KW-0325">Glycoprotein</keyword>
<keyword id="KW-0472">Membrane</keyword>
<keyword id="KW-1267">Proteomics identification</keyword>
<keyword id="KW-1185">Reference proteome</keyword>
<keyword id="KW-0677">Repeat</keyword>
<keyword id="KW-0732">Signal</keyword>
<keyword id="KW-0812">Transmembrane</keyword>
<keyword id="KW-1133">Transmembrane helix</keyword>
<evidence type="ECO:0000250" key="1"/>
<evidence type="ECO:0000255" key="2"/>
<evidence type="ECO:0000255" key="3">
    <source>
        <dbReference type="PROSITE-ProRule" id="PRU00043"/>
    </source>
</evidence>
<evidence type="ECO:0000256" key="4">
    <source>
        <dbReference type="SAM" id="MobiDB-lite"/>
    </source>
</evidence>
<evidence type="ECO:0000303" key="5">
    <source>
    </source>
</evidence>
<evidence type="ECO:0000303" key="6">
    <source>
    </source>
</evidence>
<protein>
    <recommendedName>
        <fullName>Protocadherin alpha-C2</fullName>
        <shortName>PCDH-alpha-C2</shortName>
    </recommendedName>
</protein>
<feature type="signal peptide" evidence="2">
    <location>
        <begin position="1"/>
        <end position="42"/>
    </location>
</feature>
<feature type="chain" id="PRO_0000003912" description="Protocadherin alpha-C2">
    <location>
        <begin position="43"/>
        <end position="1007"/>
    </location>
</feature>
<feature type="topological domain" description="Extracellular" evidence="2">
    <location>
        <begin position="43"/>
        <end position="708"/>
    </location>
</feature>
<feature type="transmembrane region" description="Helical" evidence="2">
    <location>
        <begin position="709"/>
        <end position="729"/>
    </location>
</feature>
<feature type="topological domain" description="Cytoplasmic" evidence="2">
    <location>
        <begin position="730"/>
        <end position="1007"/>
    </location>
</feature>
<feature type="domain" description="Cadherin 1" evidence="3">
    <location>
        <begin position="43"/>
        <end position="148"/>
    </location>
</feature>
<feature type="domain" description="Cadherin 2" evidence="3">
    <location>
        <begin position="149"/>
        <end position="257"/>
    </location>
</feature>
<feature type="domain" description="Cadherin 3" evidence="3">
    <location>
        <begin position="258"/>
        <end position="365"/>
    </location>
</feature>
<feature type="domain" description="Cadherin 4" evidence="3">
    <location>
        <begin position="374"/>
        <end position="469"/>
    </location>
</feature>
<feature type="domain" description="Cadherin 5" evidence="3">
    <location>
        <begin position="470"/>
        <end position="579"/>
    </location>
</feature>
<feature type="domain" description="Cadherin 6" evidence="3">
    <location>
        <begin position="594"/>
        <end position="691"/>
    </location>
</feature>
<feature type="repeat" description="PXXP 1">
    <location>
        <begin position="856"/>
        <end position="859"/>
    </location>
</feature>
<feature type="repeat" description="PXXP 2">
    <location>
        <begin position="889"/>
        <end position="892"/>
    </location>
</feature>
<feature type="repeat" description="PXXP 3">
    <location>
        <begin position="930"/>
        <end position="933"/>
    </location>
</feature>
<feature type="repeat" description="PXXP 4">
    <location>
        <begin position="948"/>
        <end position="951"/>
    </location>
</feature>
<feature type="region of interest" description="4 X 4 AA repeats of P-X-X-P">
    <location>
        <begin position="856"/>
        <end position="951"/>
    </location>
</feature>
<feature type="region of interest" description="Disordered" evidence="4">
    <location>
        <begin position="885"/>
        <end position="1007"/>
    </location>
</feature>
<feature type="compositionally biased region" description="Basic and acidic residues" evidence="4">
    <location>
        <begin position="966"/>
        <end position="980"/>
    </location>
</feature>
<feature type="glycosylation site" description="N-linked (GlcNAc...) asparagine" evidence="2">
    <location>
        <position position="280"/>
    </location>
</feature>
<feature type="glycosylation site" description="N-linked (GlcNAc...) asparagine" evidence="2">
    <location>
        <position position="436"/>
    </location>
</feature>
<feature type="glycosylation site" description="N-linked (GlcNAc...) asparagine" evidence="2">
    <location>
        <position position="586"/>
    </location>
</feature>
<feature type="glycosylation site" description="N-linked (GlcNAc...) asparagine" evidence="2">
    <location>
        <position position="657"/>
    </location>
</feature>
<feature type="splice variant" id="VSP_000701" description="In isoform Short." evidence="5 6">
    <original>PRQPNPDWRYSASLRAGMHSSVHLEEAGI</original>
    <variation>VRQWSGGLLQTHAFVTHPPISCDLALLSH</variation>
    <location>
        <begin position="856"/>
        <end position="884"/>
    </location>
</feature>
<feature type="splice variant" id="VSP_000702" description="In isoform Short." evidence="5 6">
    <location>
        <begin position="885"/>
        <end position="1007"/>
    </location>
</feature>
<name>PCDC2_HUMAN</name>
<comment type="function">
    <text>Potential calcium-dependent cell-adhesion protein. May be involved in the establishment and maintenance of specific neuronal connections in the brain.</text>
</comment>
<comment type="subcellular location">
    <subcellularLocation>
        <location evidence="1">Cell membrane</location>
        <topology evidence="1">Single-pass type I membrane protein</topology>
    </subcellularLocation>
</comment>
<comment type="alternative products">
    <event type="alternative splicing"/>
    <isoform>
        <id>Q9Y5I4-1</id>
        <name>Long</name>
        <sequence type="displayed"/>
    </isoform>
    <isoform>
        <id>Q9Y5I4-2</id>
        <name>Short</name>
        <sequence type="described" ref="VSP_000701 VSP_000702"/>
    </isoform>
</comment>
<dbReference type="EMBL" id="AF152304">
    <property type="protein sequence ID" value="AAD43698.1"/>
    <property type="molecule type" value="mRNA"/>
</dbReference>
<dbReference type="EMBL" id="AF152474">
    <property type="protein sequence ID" value="AAD43735.1"/>
    <property type="molecule type" value="mRNA"/>
</dbReference>
<dbReference type="EMBL" id="CH471062">
    <property type="protein sequence ID" value="EAW62000.1"/>
    <property type="molecule type" value="Genomic_DNA"/>
</dbReference>
<dbReference type="EMBL" id="BC104776">
    <property type="protein sequence ID" value="AAI04777.1"/>
    <property type="molecule type" value="mRNA"/>
</dbReference>
<dbReference type="EMBL" id="BC105111">
    <property type="protein sequence ID" value="AAI05112.1"/>
    <property type="molecule type" value="mRNA"/>
</dbReference>
<dbReference type="CCDS" id="CCDS4242.1">
    <molecule id="Q9Y5I4-1"/>
</dbReference>
<dbReference type="RefSeq" id="NP_061722.1">
    <molecule id="Q9Y5I4-1"/>
    <property type="nucleotide sequence ID" value="NM_018899.6"/>
</dbReference>
<dbReference type="RefSeq" id="NP_114089.1">
    <molecule id="Q9Y5I4-2"/>
    <property type="nucleotide sequence ID" value="NM_031883.3"/>
</dbReference>
<dbReference type="SMR" id="Q9Y5I4"/>
<dbReference type="BioGRID" id="121074">
    <property type="interactions" value="101"/>
</dbReference>
<dbReference type="FunCoup" id="Q9Y5I4">
    <property type="interactions" value="122"/>
</dbReference>
<dbReference type="IntAct" id="Q9Y5I4">
    <property type="interactions" value="45"/>
</dbReference>
<dbReference type="STRING" id="9606.ENSP00000289269"/>
<dbReference type="GlyCosmos" id="Q9Y5I4">
    <property type="glycosylation" value="4 sites, No reported glycans"/>
</dbReference>
<dbReference type="GlyGen" id="Q9Y5I4">
    <property type="glycosylation" value="4 sites"/>
</dbReference>
<dbReference type="iPTMnet" id="Q9Y5I4"/>
<dbReference type="PhosphoSitePlus" id="Q9Y5I4"/>
<dbReference type="SwissPalm" id="Q9Y5I4"/>
<dbReference type="BioMuta" id="PCDHAC2"/>
<dbReference type="DMDM" id="13878435"/>
<dbReference type="jPOST" id="Q9Y5I4"/>
<dbReference type="MassIVE" id="Q9Y5I4"/>
<dbReference type="PaxDb" id="9606-ENSP00000289269"/>
<dbReference type="PeptideAtlas" id="Q9Y5I4"/>
<dbReference type="ProteomicsDB" id="86414">
    <molecule id="Q9Y5I4-1"/>
</dbReference>
<dbReference type="ProteomicsDB" id="86415">
    <molecule id="Q9Y5I4-2"/>
</dbReference>
<dbReference type="TopDownProteomics" id="Q9Y5I4-2">
    <molecule id="Q9Y5I4-2"/>
</dbReference>
<dbReference type="Antibodypedia" id="35019">
    <property type="antibodies" value="154 antibodies from 24 providers"/>
</dbReference>
<dbReference type="DNASU" id="56134"/>
<dbReference type="Ensembl" id="ENST00000289269.7">
    <molecule id="Q9Y5I4-1"/>
    <property type="protein sequence ID" value="ENSP00000289269.5"/>
    <property type="gene ID" value="ENSG00000243232.6"/>
</dbReference>
<dbReference type="Ensembl" id="ENST00000615316.1">
    <molecule id="Q9Y5I4-2"/>
    <property type="protein sequence ID" value="ENSP00000478629.1"/>
    <property type="gene ID" value="ENSG00000243232.6"/>
</dbReference>
<dbReference type="Ensembl" id="ENST00000708329.1">
    <molecule id="Q9Y5I4-2"/>
    <property type="protein sequence ID" value="ENSP00000517174.1"/>
    <property type="gene ID" value="ENSG00000291668.1"/>
</dbReference>
<dbReference type="Ensembl" id="ENST00000708330.1">
    <molecule id="Q9Y5I4-1"/>
    <property type="protein sequence ID" value="ENSP00000517175.1"/>
    <property type="gene ID" value="ENSG00000291668.1"/>
</dbReference>
<dbReference type="GeneID" id="56134"/>
<dbReference type="KEGG" id="hsa:56134"/>
<dbReference type="MANE-Select" id="ENST00000289269.7">
    <property type="protein sequence ID" value="ENSP00000289269.5"/>
    <property type="RefSeq nucleotide sequence ID" value="NM_018899.6"/>
    <property type="RefSeq protein sequence ID" value="NP_061722.1"/>
</dbReference>
<dbReference type="UCSC" id="uc003lii.4">
    <molecule id="Q9Y5I4-1"/>
    <property type="organism name" value="human"/>
</dbReference>
<dbReference type="AGR" id="HGNC:8677"/>
<dbReference type="CTD" id="56134"/>
<dbReference type="DisGeNET" id="56134"/>
<dbReference type="GeneCards" id="PCDHAC2"/>
<dbReference type="HGNC" id="HGNC:8677">
    <property type="gene designation" value="PCDHAC2"/>
</dbReference>
<dbReference type="HPA" id="ENSG00000243232">
    <property type="expression patterns" value="Tissue enriched (parathyroid)"/>
</dbReference>
<dbReference type="MIM" id="604966">
    <property type="type" value="gene"/>
</dbReference>
<dbReference type="MIM" id="606321">
    <property type="type" value="gene"/>
</dbReference>
<dbReference type="neXtProt" id="NX_Q9Y5I4"/>
<dbReference type="OpenTargets" id="ENSG00000243232"/>
<dbReference type="PharmGKB" id="PA33023"/>
<dbReference type="VEuPathDB" id="HostDB:ENSG00000243232"/>
<dbReference type="eggNOG" id="KOG3594">
    <property type="taxonomic scope" value="Eukaryota"/>
</dbReference>
<dbReference type="GeneTree" id="ENSGT00940000160554"/>
<dbReference type="HOGENOM" id="CLU_006480_0_0_1"/>
<dbReference type="InParanoid" id="Q9Y5I4"/>
<dbReference type="OMA" id="TVHIYVV"/>
<dbReference type="OrthoDB" id="6252479at2759"/>
<dbReference type="PAN-GO" id="Q9Y5I4">
    <property type="GO annotations" value="2 GO annotations based on evolutionary models"/>
</dbReference>
<dbReference type="PhylomeDB" id="Q9Y5I4"/>
<dbReference type="TreeFam" id="TF332299"/>
<dbReference type="PathwayCommons" id="Q9Y5I4"/>
<dbReference type="SignaLink" id="Q9Y5I4"/>
<dbReference type="SIGNOR" id="Q9Y5I4"/>
<dbReference type="BioGRID-ORCS" id="56134">
    <property type="hits" value="10 hits in 1097 CRISPR screens"/>
</dbReference>
<dbReference type="GeneWiki" id="PCDHAC2"/>
<dbReference type="GenomeRNAi" id="56134"/>
<dbReference type="Pharos" id="Q9Y5I4">
    <property type="development level" value="Tbio"/>
</dbReference>
<dbReference type="PRO" id="PR:Q9Y5I4"/>
<dbReference type="Proteomes" id="UP000005640">
    <property type="component" value="Chromosome 5"/>
</dbReference>
<dbReference type="RNAct" id="Q9Y5I4">
    <property type="molecule type" value="protein"/>
</dbReference>
<dbReference type="Bgee" id="ENSG00000243232">
    <property type="expression patterns" value="Expressed in cortical plate and 101 other cell types or tissues"/>
</dbReference>
<dbReference type="GO" id="GO:0005886">
    <property type="term" value="C:plasma membrane"/>
    <property type="evidence" value="ECO:0000318"/>
    <property type="project" value="GO_Central"/>
</dbReference>
<dbReference type="GO" id="GO:0005509">
    <property type="term" value="F:calcium ion binding"/>
    <property type="evidence" value="ECO:0007669"/>
    <property type="project" value="InterPro"/>
</dbReference>
<dbReference type="GO" id="GO:0007155">
    <property type="term" value="P:cell adhesion"/>
    <property type="evidence" value="ECO:0000318"/>
    <property type="project" value="GO_Central"/>
</dbReference>
<dbReference type="GO" id="GO:0007156">
    <property type="term" value="P:homophilic cell adhesion via plasma membrane adhesion molecules"/>
    <property type="evidence" value="ECO:0007669"/>
    <property type="project" value="InterPro"/>
</dbReference>
<dbReference type="GO" id="GO:0007399">
    <property type="term" value="P:nervous system development"/>
    <property type="evidence" value="ECO:0000304"/>
    <property type="project" value="ProtInc"/>
</dbReference>
<dbReference type="GO" id="GO:0036515">
    <property type="term" value="P:serotonergic neuron axon guidance"/>
    <property type="evidence" value="ECO:0007669"/>
    <property type="project" value="Ensembl"/>
</dbReference>
<dbReference type="CDD" id="cd11304">
    <property type="entry name" value="Cadherin_repeat"/>
    <property type="match status" value="6"/>
</dbReference>
<dbReference type="FunFam" id="2.60.40.60:FF:000004">
    <property type="entry name" value="Protocadherin 1 gamma 2"/>
    <property type="match status" value="1"/>
</dbReference>
<dbReference type="FunFam" id="2.60.40.60:FF:000001">
    <property type="entry name" value="Protocadherin alpha 2"/>
    <property type="match status" value="1"/>
</dbReference>
<dbReference type="FunFam" id="2.60.40.60:FF:000002">
    <property type="entry name" value="Protocadherin alpha 2"/>
    <property type="match status" value="1"/>
</dbReference>
<dbReference type="FunFam" id="2.60.40.60:FF:000006">
    <property type="entry name" value="Protocadherin alpha 2"/>
    <property type="match status" value="1"/>
</dbReference>
<dbReference type="FunFam" id="2.60.40.60:FF:000007">
    <property type="entry name" value="Protocadherin alpha 2"/>
    <property type="match status" value="1"/>
</dbReference>
<dbReference type="FunFam" id="2.60.40.60:FF:000129">
    <property type="entry name" value="protocadherin alpha-C2 isoform X1"/>
    <property type="match status" value="1"/>
</dbReference>
<dbReference type="Gene3D" id="2.60.40.60">
    <property type="entry name" value="Cadherins"/>
    <property type="match status" value="6"/>
</dbReference>
<dbReference type="InterPro" id="IPR002126">
    <property type="entry name" value="Cadherin-like_dom"/>
</dbReference>
<dbReference type="InterPro" id="IPR015919">
    <property type="entry name" value="Cadherin-like_sf"/>
</dbReference>
<dbReference type="InterPro" id="IPR032455">
    <property type="entry name" value="Cadherin_C"/>
</dbReference>
<dbReference type="InterPro" id="IPR031904">
    <property type="entry name" value="Cadherin_CBD"/>
</dbReference>
<dbReference type="InterPro" id="IPR020894">
    <property type="entry name" value="Cadherin_CS"/>
</dbReference>
<dbReference type="InterPro" id="IPR013164">
    <property type="entry name" value="Cadherin_N"/>
</dbReference>
<dbReference type="InterPro" id="IPR050174">
    <property type="entry name" value="Protocadherin/Cadherin-CA"/>
</dbReference>
<dbReference type="PANTHER" id="PTHR24028">
    <property type="entry name" value="CADHERIN-87A"/>
    <property type="match status" value="1"/>
</dbReference>
<dbReference type="PANTHER" id="PTHR24028:SF119">
    <property type="entry name" value="PROTOCADHERIN ALPHA-C2"/>
    <property type="match status" value="1"/>
</dbReference>
<dbReference type="Pfam" id="PF00028">
    <property type="entry name" value="Cadherin"/>
    <property type="match status" value="5"/>
</dbReference>
<dbReference type="Pfam" id="PF08266">
    <property type="entry name" value="Cadherin_2"/>
    <property type="match status" value="1"/>
</dbReference>
<dbReference type="Pfam" id="PF16492">
    <property type="entry name" value="Cadherin_C_2"/>
    <property type="match status" value="1"/>
</dbReference>
<dbReference type="Pfam" id="PF15974">
    <property type="entry name" value="Cadherin_tail"/>
    <property type="match status" value="1"/>
</dbReference>
<dbReference type="PRINTS" id="PR00205">
    <property type="entry name" value="CADHERIN"/>
</dbReference>
<dbReference type="SMART" id="SM00112">
    <property type="entry name" value="CA"/>
    <property type="match status" value="6"/>
</dbReference>
<dbReference type="SUPFAM" id="SSF49313">
    <property type="entry name" value="Cadherin-like"/>
    <property type="match status" value="6"/>
</dbReference>
<dbReference type="PROSITE" id="PS00232">
    <property type="entry name" value="CADHERIN_1"/>
    <property type="match status" value="5"/>
</dbReference>
<dbReference type="PROSITE" id="PS50268">
    <property type="entry name" value="CADHERIN_2"/>
    <property type="match status" value="6"/>
</dbReference>